<dbReference type="EMBL" id="U93357">
    <property type="protein sequence ID" value="AAB96891.1"/>
    <property type="molecule type" value="Genomic_DNA"/>
</dbReference>
<dbReference type="EMBL" id="AE004437">
    <property type="protein sequence ID" value="AAG19025.1"/>
    <property type="molecule type" value="Genomic_DNA"/>
</dbReference>
<dbReference type="PIR" id="E84207">
    <property type="entry name" value="E84207"/>
</dbReference>
<dbReference type="PIR" id="T44957">
    <property type="entry name" value="T44957"/>
</dbReference>
<dbReference type="RefSeq" id="WP_010902321.1">
    <property type="nucleotide sequence ID" value="NC_002607.1"/>
</dbReference>
<dbReference type="SMR" id="Q9HRY3"/>
<dbReference type="STRING" id="64091.VNG_0489G"/>
<dbReference type="PaxDb" id="64091-VNG_0489G"/>
<dbReference type="GeneID" id="68693397"/>
<dbReference type="KEGG" id="hal:VNG_0489G"/>
<dbReference type="PATRIC" id="fig|64091.14.peg.372"/>
<dbReference type="HOGENOM" id="CLU_017633_0_7_2"/>
<dbReference type="InParanoid" id="Q9HRY3"/>
<dbReference type="OrthoDB" id="8967at2157"/>
<dbReference type="PhylomeDB" id="Q9HRY3"/>
<dbReference type="Proteomes" id="UP000000554">
    <property type="component" value="Chromosome"/>
</dbReference>
<dbReference type="GO" id="GO:0005737">
    <property type="term" value="C:cytoplasm"/>
    <property type="evidence" value="ECO:0000318"/>
    <property type="project" value="GO_Central"/>
</dbReference>
<dbReference type="GO" id="GO:0005524">
    <property type="term" value="F:ATP binding"/>
    <property type="evidence" value="ECO:0007669"/>
    <property type="project" value="InterPro"/>
</dbReference>
<dbReference type="GO" id="GO:0031072">
    <property type="term" value="F:heat shock protein binding"/>
    <property type="evidence" value="ECO:0007669"/>
    <property type="project" value="InterPro"/>
</dbReference>
<dbReference type="GO" id="GO:0051082">
    <property type="term" value="F:unfolded protein binding"/>
    <property type="evidence" value="ECO:0000318"/>
    <property type="project" value="GO_Central"/>
</dbReference>
<dbReference type="GO" id="GO:0008270">
    <property type="term" value="F:zinc ion binding"/>
    <property type="evidence" value="ECO:0007669"/>
    <property type="project" value="UniProtKB-UniRule"/>
</dbReference>
<dbReference type="GO" id="GO:0051085">
    <property type="term" value="P:chaperone cofactor-dependent protein refolding"/>
    <property type="evidence" value="ECO:0000318"/>
    <property type="project" value="GO_Central"/>
</dbReference>
<dbReference type="GO" id="GO:0006260">
    <property type="term" value="P:DNA replication"/>
    <property type="evidence" value="ECO:0007669"/>
    <property type="project" value="UniProtKB-KW"/>
</dbReference>
<dbReference type="GO" id="GO:0042026">
    <property type="term" value="P:protein refolding"/>
    <property type="evidence" value="ECO:0000318"/>
    <property type="project" value="GO_Central"/>
</dbReference>
<dbReference type="GO" id="GO:0009408">
    <property type="term" value="P:response to heat"/>
    <property type="evidence" value="ECO:0007669"/>
    <property type="project" value="InterPro"/>
</dbReference>
<dbReference type="CDD" id="cd06257">
    <property type="entry name" value="DnaJ"/>
    <property type="match status" value="1"/>
</dbReference>
<dbReference type="CDD" id="cd10747">
    <property type="entry name" value="DnaJ_C"/>
    <property type="match status" value="1"/>
</dbReference>
<dbReference type="CDD" id="cd10719">
    <property type="entry name" value="DnaJ_zf"/>
    <property type="match status" value="1"/>
</dbReference>
<dbReference type="FunFam" id="2.60.260.20:FF:000005">
    <property type="entry name" value="Chaperone protein dnaJ 1, mitochondrial"/>
    <property type="match status" value="1"/>
</dbReference>
<dbReference type="FunFam" id="2.10.230.10:FF:000002">
    <property type="entry name" value="Molecular chaperone DnaJ"/>
    <property type="match status" value="1"/>
</dbReference>
<dbReference type="Gene3D" id="1.10.287.110">
    <property type="entry name" value="DnaJ domain"/>
    <property type="match status" value="1"/>
</dbReference>
<dbReference type="Gene3D" id="2.10.230.10">
    <property type="entry name" value="Heat shock protein DnaJ, cysteine-rich domain"/>
    <property type="match status" value="1"/>
</dbReference>
<dbReference type="Gene3D" id="2.60.260.20">
    <property type="entry name" value="Urease metallochaperone UreE, N-terminal domain"/>
    <property type="match status" value="2"/>
</dbReference>
<dbReference type="HAMAP" id="MF_01152">
    <property type="entry name" value="DnaJ"/>
    <property type="match status" value="1"/>
</dbReference>
<dbReference type="InterPro" id="IPR012724">
    <property type="entry name" value="DnaJ"/>
</dbReference>
<dbReference type="InterPro" id="IPR002939">
    <property type="entry name" value="DnaJ_C"/>
</dbReference>
<dbReference type="InterPro" id="IPR001623">
    <property type="entry name" value="DnaJ_domain"/>
</dbReference>
<dbReference type="InterPro" id="IPR008971">
    <property type="entry name" value="HSP40/DnaJ_pept-bd"/>
</dbReference>
<dbReference type="InterPro" id="IPR001305">
    <property type="entry name" value="HSP_DnaJ_Cys-rich_dom"/>
</dbReference>
<dbReference type="InterPro" id="IPR036410">
    <property type="entry name" value="HSP_DnaJ_Cys-rich_dom_sf"/>
</dbReference>
<dbReference type="InterPro" id="IPR036869">
    <property type="entry name" value="J_dom_sf"/>
</dbReference>
<dbReference type="NCBIfam" id="TIGR02349">
    <property type="entry name" value="DnaJ_bact"/>
    <property type="match status" value="1"/>
</dbReference>
<dbReference type="NCBIfam" id="NF008035">
    <property type="entry name" value="PRK10767.1"/>
    <property type="match status" value="1"/>
</dbReference>
<dbReference type="PANTHER" id="PTHR43096">
    <property type="entry name" value="DNAJ HOMOLOG 1, MITOCHONDRIAL-RELATED"/>
    <property type="match status" value="1"/>
</dbReference>
<dbReference type="PANTHER" id="PTHR43096:SF52">
    <property type="entry name" value="DNAJ HOMOLOG 1, MITOCHONDRIAL-RELATED"/>
    <property type="match status" value="1"/>
</dbReference>
<dbReference type="Pfam" id="PF00226">
    <property type="entry name" value="DnaJ"/>
    <property type="match status" value="1"/>
</dbReference>
<dbReference type="Pfam" id="PF01556">
    <property type="entry name" value="DnaJ_C"/>
    <property type="match status" value="1"/>
</dbReference>
<dbReference type="Pfam" id="PF00684">
    <property type="entry name" value="DnaJ_CXXCXGXG"/>
    <property type="match status" value="1"/>
</dbReference>
<dbReference type="PRINTS" id="PR00625">
    <property type="entry name" value="JDOMAIN"/>
</dbReference>
<dbReference type="SMART" id="SM00271">
    <property type="entry name" value="DnaJ"/>
    <property type="match status" value="1"/>
</dbReference>
<dbReference type="SUPFAM" id="SSF46565">
    <property type="entry name" value="Chaperone J-domain"/>
    <property type="match status" value="1"/>
</dbReference>
<dbReference type="SUPFAM" id="SSF57938">
    <property type="entry name" value="DnaJ/Hsp40 cysteine-rich domain"/>
    <property type="match status" value="1"/>
</dbReference>
<dbReference type="SUPFAM" id="SSF49493">
    <property type="entry name" value="HSP40/DnaJ peptide-binding domain"/>
    <property type="match status" value="2"/>
</dbReference>
<dbReference type="PROSITE" id="PS50076">
    <property type="entry name" value="DNAJ_2"/>
    <property type="match status" value="1"/>
</dbReference>
<dbReference type="PROSITE" id="PS51188">
    <property type="entry name" value="ZF_CR"/>
    <property type="match status" value="1"/>
</dbReference>
<feature type="chain" id="PRO_0000070947" description="Chaperone protein DnaJ">
    <location>
        <begin position="1"/>
        <end position="391"/>
    </location>
</feature>
<feature type="domain" description="J" evidence="1">
    <location>
        <begin position="4"/>
        <end position="68"/>
    </location>
</feature>
<feature type="repeat" description="CXXCXGXG motif">
    <location>
        <begin position="165"/>
        <end position="172"/>
    </location>
</feature>
<feature type="repeat" description="CXXCXGXG motif">
    <location>
        <begin position="182"/>
        <end position="189"/>
    </location>
</feature>
<feature type="repeat" description="CXXCXGXG motif">
    <location>
        <begin position="208"/>
        <end position="215"/>
    </location>
</feature>
<feature type="repeat" description="CXXCXGXG motif">
    <location>
        <begin position="222"/>
        <end position="229"/>
    </location>
</feature>
<feature type="zinc finger region" description="CR-type" evidence="1">
    <location>
        <begin position="152"/>
        <end position="234"/>
    </location>
</feature>
<feature type="region of interest" description="Disordered" evidence="2">
    <location>
        <begin position="53"/>
        <end position="94"/>
    </location>
</feature>
<feature type="region of interest" description="Disordered" evidence="2">
    <location>
        <begin position="117"/>
        <end position="136"/>
    </location>
</feature>
<feature type="compositionally biased region" description="Basic and acidic residues" evidence="2">
    <location>
        <begin position="53"/>
        <end position="79"/>
    </location>
</feature>
<feature type="compositionally biased region" description="Gly residues" evidence="2">
    <location>
        <begin position="81"/>
        <end position="94"/>
    </location>
</feature>
<feature type="compositionally biased region" description="Gly residues" evidence="2">
    <location>
        <begin position="119"/>
        <end position="129"/>
    </location>
</feature>
<feature type="binding site" evidence="1">
    <location>
        <position position="165"/>
    </location>
    <ligand>
        <name>Zn(2+)</name>
        <dbReference type="ChEBI" id="CHEBI:29105"/>
        <label>1</label>
    </ligand>
</feature>
<feature type="binding site" evidence="1">
    <location>
        <position position="168"/>
    </location>
    <ligand>
        <name>Zn(2+)</name>
        <dbReference type="ChEBI" id="CHEBI:29105"/>
        <label>1</label>
    </ligand>
</feature>
<feature type="binding site" evidence="1">
    <location>
        <position position="182"/>
    </location>
    <ligand>
        <name>Zn(2+)</name>
        <dbReference type="ChEBI" id="CHEBI:29105"/>
        <label>2</label>
    </ligand>
</feature>
<feature type="binding site" evidence="1">
    <location>
        <position position="185"/>
    </location>
    <ligand>
        <name>Zn(2+)</name>
        <dbReference type="ChEBI" id="CHEBI:29105"/>
        <label>2</label>
    </ligand>
</feature>
<feature type="binding site" evidence="1">
    <location>
        <position position="208"/>
    </location>
    <ligand>
        <name>Zn(2+)</name>
        <dbReference type="ChEBI" id="CHEBI:29105"/>
        <label>2</label>
    </ligand>
</feature>
<feature type="binding site" evidence="1">
    <location>
        <position position="211"/>
    </location>
    <ligand>
        <name>Zn(2+)</name>
        <dbReference type="ChEBI" id="CHEBI:29105"/>
        <label>2</label>
    </ligand>
</feature>
<feature type="binding site" evidence="1">
    <location>
        <position position="222"/>
    </location>
    <ligand>
        <name>Zn(2+)</name>
        <dbReference type="ChEBI" id="CHEBI:29105"/>
        <label>1</label>
    </ligand>
</feature>
<feature type="binding site" evidence="1">
    <location>
        <position position="225"/>
    </location>
    <ligand>
        <name>Zn(2+)</name>
        <dbReference type="ChEBI" id="CHEBI:29105"/>
        <label>1</label>
    </ligand>
</feature>
<feature type="sequence conflict" description="In Ref. 1; AAB96891." evidence="3" ref="1">
    <original>D</original>
    <variation>G</variation>
    <location>
        <position position="186"/>
    </location>
</feature>
<feature type="sequence conflict" description="In Ref. 1; AAB96891." evidence="3" ref="1">
    <original>LRMD</original>
    <variation>CAWT</variation>
    <location>
        <begin position="251"/>
        <end position="254"/>
    </location>
</feature>
<feature type="sequence conflict" description="In Ref. 1; AAB96891." evidence="3" ref="1">
    <original>P</original>
    <variation>T</variation>
    <location>
        <position position="259"/>
    </location>
</feature>
<feature type="sequence conflict" description="In Ref. 1; AAB96891." evidence="3" ref="1">
    <original>GAPN</original>
    <variation>ER</variation>
    <location>
        <begin position="263"/>
        <end position="266"/>
    </location>
</feature>
<feature type="sequence conflict" description="In Ref. 1; AAB96891." evidence="3" ref="1">
    <original>DDLHHRHAV</original>
    <variation>TTSITATPF</variation>
    <location>
        <begin position="286"/>
        <end position="294"/>
    </location>
</feature>
<organism>
    <name type="scientific">Halobacterium salinarum (strain ATCC 700922 / JCM 11081 / NRC-1)</name>
    <name type="common">Halobacterium halobium</name>
    <dbReference type="NCBI Taxonomy" id="64091"/>
    <lineage>
        <taxon>Archaea</taxon>
        <taxon>Methanobacteriati</taxon>
        <taxon>Methanobacteriota</taxon>
        <taxon>Stenosarchaea group</taxon>
        <taxon>Halobacteria</taxon>
        <taxon>Halobacteriales</taxon>
        <taxon>Halobacteriaceae</taxon>
        <taxon>Halobacterium</taxon>
        <taxon>Halobacterium salinarum NRC-34001</taxon>
    </lineage>
</organism>
<gene>
    <name evidence="1" type="primary">dnaJ</name>
    <name type="synonym">hsp40</name>
    <name type="ordered locus">VNG_0489G</name>
</gene>
<sequence length="391" mass="41713">MSEDFYDVLGVSRDATEDEIMQAYRDQVSEYHPDVSDDPDAEEKFKKIQKAKDVLTDEETRQQYDQLGHERFEEAEKRGATGNGGGGAGGMGGAGGPFGGGMGGGAGGGMGDIFEQFFGGAGGGGGRGRSGPEQGRDLRTDLTVTLSEAYRGVSKQVTVRRPESCADCGGSGYPEDADVRTCPQCDGQGVVTQVRQTPLGRVQQRQECSRCGGEGELHSETCSTCGGQGQTRERATLTVDIPEGIRTGQTLRMDGEGAPGEPGAPNGDLLVDVTVEEHPDFERDGDDLHHRHAVSFPQAVFGAEIEVPTLDGAATFDLDAGTQSGETFRLKGKGMPRLRRRGNGDLYVTVQVVTPESLSDEQRDALEQFAEAGGEEIDVEQGFFEKLKNSF</sequence>
<keyword id="KW-0143">Chaperone</keyword>
<keyword id="KW-0963">Cytoplasm</keyword>
<keyword id="KW-0235">DNA replication</keyword>
<keyword id="KW-0479">Metal-binding</keyword>
<keyword id="KW-1185">Reference proteome</keyword>
<keyword id="KW-0677">Repeat</keyword>
<keyword id="KW-0346">Stress response</keyword>
<keyword id="KW-0862">Zinc</keyword>
<keyword id="KW-0863">Zinc-finger</keyword>
<proteinExistence type="inferred from homology"/>
<name>DNAJ_HALSA</name>
<protein>
    <recommendedName>
        <fullName evidence="1">Chaperone protein DnaJ</fullName>
    </recommendedName>
</protein>
<evidence type="ECO:0000255" key="1">
    <source>
        <dbReference type="HAMAP-Rule" id="MF_01152"/>
    </source>
</evidence>
<evidence type="ECO:0000256" key="2">
    <source>
        <dbReference type="SAM" id="MobiDB-lite"/>
    </source>
</evidence>
<evidence type="ECO:0000305" key="3"/>
<accession>Q9HRY3</accession>
<accession>O34135</accession>
<reference key="1">
    <citation type="journal article" date="1997" name="J. Mol. Evol.">
        <title>The sequences of heat shock protein 40 (DnaJ) homologs provide evidence for a close evolutionary relationship between the Deinococcus-thermus group and cyanobacteria.</title>
        <authorList>
            <person name="Bustard K."/>
            <person name="Gupta R.S."/>
        </authorList>
    </citation>
    <scope>NUCLEOTIDE SEQUENCE [GENOMIC DNA]</scope>
    <source>
        <strain>ATCC 33170 / DSM 669 / NCCB 81095 / NRC 34001</strain>
    </source>
</reference>
<reference key="2">
    <citation type="journal article" date="2000" name="Proc. Natl. Acad. Sci. U.S.A.">
        <title>Genome sequence of Halobacterium species NRC-1.</title>
        <authorList>
            <person name="Ng W.V."/>
            <person name="Kennedy S.P."/>
            <person name="Mahairas G.G."/>
            <person name="Berquist B."/>
            <person name="Pan M."/>
            <person name="Shukla H.D."/>
            <person name="Lasky S.R."/>
            <person name="Baliga N.S."/>
            <person name="Thorsson V."/>
            <person name="Sbrogna J."/>
            <person name="Swartzell S."/>
            <person name="Weir D."/>
            <person name="Hall J."/>
            <person name="Dahl T.A."/>
            <person name="Welti R."/>
            <person name="Goo Y.A."/>
            <person name="Leithauser B."/>
            <person name="Keller K."/>
            <person name="Cruz R."/>
            <person name="Danson M.J."/>
            <person name="Hough D.W."/>
            <person name="Maddocks D.G."/>
            <person name="Jablonski P.E."/>
            <person name="Krebs M.P."/>
            <person name="Angevine C.M."/>
            <person name="Dale H."/>
            <person name="Isenbarger T.A."/>
            <person name="Peck R.F."/>
            <person name="Pohlschroder M."/>
            <person name="Spudich J.L."/>
            <person name="Jung K.-H."/>
            <person name="Alam M."/>
            <person name="Freitas T."/>
            <person name="Hou S."/>
            <person name="Daniels C.J."/>
            <person name="Dennis P.P."/>
            <person name="Omer A.D."/>
            <person name="Ebhardt H."/>
            <person name="Lowe T.M."/>
            <person name="Liang P."/>
            <person name="Riley M."/>
            <person name="Hood L."/>
            <person name="DasSarma S."/>
        </authorList>
    </citation>
    <scope>NUCLEOTIDE SEQUENCE [LARGE SCALE GENOMIC DNA]</scope>
    <source>
        <strain>ATCC 700922 / JCM 11081 / NRC-1</strain>
    </source>
</reference>
<comment type="function">
    <text evidence="1">Participates actively in the response to hyperosmotic and heat shock by preventing the aggregation of stress-denatured proteins and by disaggregating proteins, also in an autonomous, DnaK-independent fashion. Unfolded proteins bind initially to DnaJ; upon interaction with the DnaJ-bound protein, DnaK hydrolyzes its bound ATP, resulting in the formation of a stable complex. GrpE releases ADP from DnaK; ATP binding to DnaK triggers the release of the substrate protein, thus completing the reaction cycle. Several rounds of ATP-dependent interactions between DnaJ, DnaK and GrpE are required for fully efficient folding. Also involved, together with DnaK and GrpE, in the DNA replication of plasmids through activation of initiation proteins.</text>
</comment>
<comment type="cofactor">
    <cofactor evidence="1">
        <name>Zn(2+)</name>
        <dbReference type="ChEBI" id="CHEBI:29105"/>
    </cofactor>
    <text evidence="1">Binds 2 Zn(2+) ions per monomer.</text>
</comment>
<comment type="subunit">
    <text evidence="1">Homodimer.</text>
</comment>
<comment type="subcellular location">
    <subcellularLocation>
        <location evidence="1">Cytoplasm</location>
    </subcellularLocation>
</comment>
<comment type="domain">
    <text evidence="1">The J domain is necessary and sufficient to stimulate DnaK ATPase activity. Zinc center 1 plays an important role in the autonomous, DnaK-independent chaperone activity of DnaJ. Zinc center 2 is essential for interaction with DnaK and for DnaJ activity.</text>
</comment>
<comment type="similarity">
    <text evidence="1">Belongs to the DnaJ family.</text>
</comment>